<accession>Q5AK62</accession>
<accession>A0A1D8PP12</accession>
<accession>Q5AKM5</accession>
<protein>
    <recommendedName>
        <fullName>Virulence protein SSD1</fullName>
    </recommendedName>
</protein>
<gene>
    <name type="primary">SSD1</name>
    <name type="ordered locus">CAALFM_C504730CA</name>
    <name type="ORF">CaO19.11441</name>
    <name type="ORF">CaO19.3959</name>
</gene>
<reference key="1">
    <citation type="journal article" date="2004" name="Proc. Natl. Acad. Sci. U.S.A.">
        <title>The diploid genome sequence of Candida albicans.</title>
        <authorList>
            <person name="Jones T."/>
            <person name="Federspiel N.A."/>
            <person name="Chibana H."/>
            <person name="Dungan J."/>
            <person name="Kalman S."/>
            <person name="Magee B.B."/>
            <person name="Newport G."/>
            <person name="Thorstenson Y.R."/>
            <person name="Agabian N."/>
            <person name="Magee P.T."/>
            <person name="Davis R.W."/>
            <person name="Scherer S."/>
        </authorList>
    </citation>
    <scope>NUCLEOTIDE SEQUENCE [LARGE SCALE GENOMIC DNA]</scope>
    <source>
        <strain>SC5314 / ATCC MYA-2876</strain>
    </source>
</reference>
<reference key="2">
    <citation type="journal article" date="2007" name="Genome Biol.">
        <title>Assembly of the Candida albicans genome into sixteen supercontigs aligned on the eight chromosomes.</title>
        <authorList>
            <person name="van het Hoog M."/>
            <person name="Rast T.J."/>
            <person name="Martchenko M."/>
            <person name="Grindle S."/>
            <person name="Dignard D."/>
            <person name="Hogues H."/>
            <person name="Cuomo C."/>
            <person name="Berriman M."/>
            <person name="Scherer S."/>
            <person name="Magee B.B."/>
            <person name="Whiteway M."/>
            <person name="Chibana H."/>
            <person name="Nantel A."/>
            <person name="Magee P.T."/>
        </authorList>
    </citation>
    <scope>GENOME REANNOTATION</scope>
    <source>
        <strain>SC5314 / ATCC MYA-2876</strain>
    </source>
</reference>
<reference key="3">
    <citation type="journal article" date="2013" name="Genome Biol.">
        <title>Assembly of a phased diploid Candida albicans genome facilitates allele-specific measurements and provides a simple model for repeat and indel structure.</title>
        <authorList>
            <person name="Muzzey D."/>
            <person name="Schwartz K."/>
            <person name="Weissman J.S."/>
            <person name="Sherlock G."/>
        </authorList>
    </citation>
    <scope>NUCLEOTIDE SEQUENCE [LARGE SCALE GENOMIC DNA]</scope>
    <scope>GENOME REANNOTATION</scope>
    <source>
        <strain>SC5314 / ATCC MYA-2876</strain>
    </source>
</reference>
<reference key="4">
    <citation type="journal article" date="1998" name="Microbiology">
        <title>Candida albicans SSD1 can suppress multiple mutations in Saccharomyces cerevisiae.</title>
        <authorList>
            <person name="Chen C.Y."/>
            <person name="Rosamond J."/>
        </authorList>
    </citation>
    <scope>FUNCTION</scope>
    <scope>INDUCTION</scope>
</reference>
<reference key="5">
    <citation type="journal article" date="2008" name="Eukaryot. Cell">
        <title>SSD1 is integral to host defense peptide resistance in Candida albicans.</title>
        <authorList>
            <person name="Gank K.D."/>
            <person name="Yeaman M.R."/>
            <person name="Kojima S."/>
            <person name="Yount N.Y."/>
            <person name="Park H."/>
            <person name="Edwards J.E. Jr."/>
            <person name="Filler S.G."/>
            <person name="Fu Y."/>
        </authorList>
    </citation>
    <scope>FUNCTION</scope>
    <scope>DISRUPTION PHENOTYPE</scope>
</reference>
<reference key="6">
    <citation type="journal article" date="2013" name="Eukaryot. Cell">
        <title>Bcr1 functions downstream of Ssd1 to mediate antimicrobial peptide resistance in Candida albicans.</title>
        <authorList>
            <person name="Jung S.I."/>
            <person name="Finkel J.S."/>
            <person name="Solis N.V."/>
            <person name="Chaili S."/>
            <person name="Mitchell A.P."/>
            <person name="Yeaman M.R."/>
            <person name="Filler S.G."/>
        </authorList>
    </citation>
    <scope>FUNCTION</scope>
</reference>
<feature type="chain" id="PRO_0000424599" description="Virulence protein SSD1">
    <location>
        <begin position="1"/>
        <end position="1274"/>
    </location>
</feature>
<feature type="domain" description="CSD2" evidence="1">
    <location>
        <begin position="562"/>
        <end position="637"/>
    </location>
</feature>
<feature type="domain" description="RNB" evidence="1">
    <location>
        <begin position="688"/>
        <end position="1001"/>
    </location>
</feature>
<feature type="domain" description="DIS3L2 C-terminal" evidence="1">
    <location>
        <begin position="1050"/>
        <end position="1136"/>
    </location>
</feature>
<feature type="region of interest" description="Disordered" evidence="2">
    <location>
        <begin position="1"/>
        <end position="38"/>
    </location>
</feature>
<feature type="region of interest" description="Disordered" evidence="2">
    <location>
        <begin position="61"/>
        <end position="124"/>
    </location>
</feature>
<feature type="region of interest" description="Disordered" evidence="2">
    <location>
        <begin position="138"/>
        <end position="337"/>
    </location>
</feature>
<feature type="region of interest" description="Disordered" evidence="2">
    <location>
        <begin position="413"/>
        <end position="488"/>
    </location>
</feature>
<feature type="region of interest" description="Disordered" evidence="2">
    <location>
        <begin position="1174"/>
        <end position="1217"/>
    </location>
</feature>
<feature type="compositionally biased region" description="Low complexity" evidence="2">
    <location>
        <begin position="1"/>
        <end position="13"/>
    </location>
</feature>
<feature type="compositionally biased region" description="Basic residues" evidence="2">
    <location>
        <begin position="19"/>
        <end position="32"/>
    </location>
</feature>
<feature type="compositionally biased region" description="Polar residues" evidence="2">
    <location>
        <begin position="72"/>
        <end position="81"/>
    </location>
</feature>
<feature type="compositionally biased region" description="Low complexity" evidence="2">
    <location>
        <begin position="95"/>
        <end position="106"/>
    </location>
</feature>
<feature type="compositionally biased region" description="Polar residues" evidence="2">
    <location>
        <begin position="139"/>
        <end position="152"/>
    </location>
</feature>
<feature type="compositionally biased region" description="Low complexity" evidence="2">
    <location>
        <begin position="177"/>
        <end position="187"/>
    </location>
</feature>
<feature type="compositionally biased region" description="Polar residues" evidence="2">
    <location>
        <begin position="248"/>
        <end position="263"/>
    </location>
</feature>
<feature type="compositionally biased region" description="Low complexity" evidence="2">
    <location>
        <begin position="264"/>
        <end position="282"/>
    </location>
</feature>
<feature type="compositionally biased region" description="Gly residues" evidence="2">
    <location>
        <begin position="320"/>
        <end position="330"/>
    </location>
</feature>
<feature type="compositionally biased region" description="Basic and acidic residues" evidence="2">
    <location>
        <begin position="413"/>
        <end position="437"/>
    </location>
</feature>
<feature type="compositionally biased region" description="Polar residues" evidence="2">
    <location>
        <begin position="438"/>
        <end position="453"/>
    </location>
</feature>
<feature type="compositionally biased region" description="Basic and acidic residues" evidence="2">
    <location>
        <begin position="1178"/>
        <end position="1189"/>
    </location>
</feature>
<feature type="compositionally biased region" description="Polar residues" evidence="2">
    <location>
        <begin position="1190"/>
        <end position="1207"/>
    </location>
</feature>
<dbReference type="EMBL" id="CP017627">
    <property type="protein sequence ID" value="AOW29879.1"/>
    <property type="molecule type" value="Genomic_DNA"/>
</dbReference>
<dbReference type="RefSeq" id="XP_721868.2">
    <property type="nucleotide sequence ID" value="XM_716775.2"/>
</dbReference>
<dbReference type="SMR" id="Q5AK62"/>
<dbReference type="BioGRID" id="1219452">
    <property type="interactions" value="2"/>
</dbReference>
<dbReference type="FunCoup" id="Q5AK62">
    <property type="interactions" value="245"/>
</dbReference>
<dbReference type="STRING" id="237561.Q5AK62"/>
<dbReference type="EnsemblFungi" id="C5_04730C_A-T">
    <property type="protein sequence ID" value="C5_04730C_A-T-p1"/>
    <property type="gene ID" value="C5_04730C_A"/>
</dbReference>
<dbReference type="GeneID" id="3636520"/>
<dbReference type="KEGG" id="cal:CAALFM_C504730CA"/>
<dbReference type="CGD" id="CAL0000187484">
    <property type="gene designation" value="SSD1"/>
</dbReference>
<dbReference type="VEuPathDB" id="FungiDB:C5_04730C_A"/>
<dbReference type="eggNOG" id="KOG2102">
    <property type="taxonomic scope" value="Eukaryota"/>
</dbReference>
<dbReference type="HOGENOM" id="CLU_002333_0_3_1"/>
<dbReference type="InParanoid" id="Q5AK62"/>
<dbReference type="OMA" id="QIQATHQ"/>
<dbReference type="OrthoDB" id="372421at2759"/>
<dbReference type="PRO" id="PR:Q5AK62"/>
<dbReference type="Proteomes" id="UP000000559">
    <property type="component" value="Chromosome 5"/>
</dbReference>
<dbReference type="GO" id="GO:0005935">
    <property type="term" value="C:cellular bud neck"/>
    <property type="evidence" value="ECO:0007669"/>
    <property type="project" value="EnsemblFungi"/>
</dbReference>
<dbReference type="GO" id="GO:0010494">
    <property type="term" value="C:cytoplasmic stress granule"/>
    <property type="evidence" value="ECO:0007669"/>
    <property type="project" value="EnsemblFungi"/>
</dbReference>
<dbReference type="GO" id="GO:0005634">
    <property type="term" value="C:nucleus"/>
    <property type="evidence" value="ECO:0007669"/>
    <property type="project" value="EnsemblFungi"/>
</dbReference>
<dbReference type="GO" id="GO:0000932">
    <property type="term" value="C:P-body"/>
    <property type="evidence" value="ECO:0000318"/>
    <property type="project" value="GO_Central"/>
</dbReference>
<dbReference type="GO" id="GO:0000175">
    <property type="term" value="F:3'-5'-RNA exonuclease activity"/>
    <property type="evidence" value="ECO:0000318"/>
    <property type="project" value="GO_Central"/>
</dbReference>
<dbReference type="GO" id="GO:0003730">
    <property type="term" value="F:mRNA 3'-UTR binding"/>
    <property type="evidence" value="ECO:0007669"/>
    <property type="project" value="EnsemblFungi"/>
</dbReference>
<dbReference type="GO" id="GO:0048027">
    <property type="term" value="F:mRNA 5'-UTR binding"/>
    <property type="evidence" value="ECO:0007669"/>
    <property type="project" value="EnsemblFungi"/>
</dbReference>
<dbReference type="GO" id="GO:0000900">
    <property type="term" value="F:mRNA regulatory element binding translation repressor activity"/>
    <property type="evidence" value="ECO:0007669"/>
    <property type="project" value="EnsemblFungi"/>
</dbReference>
<dbReference type="GO" id="GO:0008298">
    <property type="term" value="P:intracellular mRNA localization"/>
    <property type="evidence" value="ECO:0007669"/>
    <property type="project" value="EnsemblFungi"/>
</dbReference>
<dbReference type="GO" id="GO:0006402">
    <property type="term" value="P:mRNA catabolic process"/>
    <property type="evidence" value="ECO:0000318"/>
    <property type="project" value="GO_Central"/>
</dbReference>
<dbReference type="GO" id="GO:0060237">
    <property type="term" value="P:regulation of fungal-type cell wall organization"/>
    <property type="evidence" value="ECO:0007669"/>
    <property type="project" value="EnsemblFungi"/>
</dbReference>
<dbReference type="GO" id="GO:1903450">
    <property type="term" value="P:regulation of G1 to G0 transition"/>
    <property type="evidence" value="ECO:0007669"/>
    <property type="project" value="EnsemblFungi"/>
</dbReference>
<dbReference type="GO" id="GO:0042783">
    <property type="term" value="P:symbiont-mediated evasion of host immune response"/>
    <property type="evidence" value="ECO:0000315"/>
    <property type="project" value="CGD"/>
</dbReference>
<dbReference type="FunFam" id="2.40.50.690:FF:000001">
    <property type="entry name" value="Cell wall biogenesis protein"/>
    <property type="match status" value="1"/>
</dbReference>
<dbReference type="FunFam" id="2.40.50.700:FF:000002">
    <property type="entry name" value="Cell wall biogenesis protein"/>
    <property type="match status" value="1"/>
</dbReference>
<dbReference type="FunFam" id="2.40.50.140:FF:000100">
    <property type="entry name" value="Cell wall biogenesis protein phosphatase"/>
    <property type="match status" value="1"/>
</dbReference>
<dbReference type="Gene3D" id="2.40.50.690">
    <property type="match status" value="1"/>
</dbReference>
<dbReference type="Gene3D" id="2.40.50.700">
    <property type="match status" value="1"/>
</dbReference>
<dbReference type="Gene3D" id="2.40.50.140">
    <property type="entry name" value="Nucleic acid-binding proteins"/>
    <property type="match status" value="1"/>
</dbReference>
<dbReference type="InterPro" id="IPR041505">
    <property type="entry name" value="Dis3_CSD2"/>
</dbReference>
<dbReference type="InterPro" id="IPR041093">
    <property type="entry name" value="Dis3l2-like_C"/>
</dbReference>
<dbReference type="InterPro" id="IPR012340">
    <property type="entry name" value="NA-bd_OB-fold"/>
</dbReference>
<dbReference type="InterPro" id="IPR001900">
    <property type="entry name" value="RNase_II/R"/>
</dbReference>
<dbReference type="InterPro" id="IPR050180">
    <property type="entry name" value="RNR_Ribonuclease"/>
</dbReference>
<dbReference type="PANTHER" id="PTHR23355:SF9">
    <property type="entry name" value="DIS3-LIKE EXONUCLEASE 2"/>
    <property type="match status" value="1"/>
</dbReference>
<dbReference type="PANTHER" id="PTHR23355">
    <property type="entry name" value="RIBONUCLEASE"/>
    <property type="match status" value="1"/>
</dbReference>
<dbReference type="Pfam" id="PF17877">
    <property type="entry name" value="Dis3l2_C_term"/>
    <property type="match status" value="1"/>
</dbReference>
<dbReference type="Pfam" id="PF17849">
    <property type="entry name" value="OB_Dis3"/>
    <property type="match status" value="1"/>
</dbReference>
<dbReference type="Pfam" id="PF00773">
    <property type="entry name" value="RNB"/>
    <property type="match status" value="1"/>
</dbReference>
<dbReference type="SMART" id="SM00955">
    <property type="entry name" value="RNB"/>
    <property type="match status" value="1"/>
</dbReference>
<dbReference type="SUPFAM" id="SSF50249">
    <property type="entry name" value="Nucleic acid-binding proteins"/>
    <property type="match status" value="2"/>
</dbReference>
<proteinExistence type="evidence at transcript level"/>
<sequence length="1274" mass="141280">MSSSQDYNNNSNNTPARVSSRKGKNLHVAHRRSPSELTNLMVEQYNLQRQLEEVQAQQKLLEEKQKQQQQQFTYPSAQGSSELAPPPISSGYGGNRSSHSRSSSINTHRRTGSGSGGTAHGHSRRHSLGLNEAIKAAANQKQSNRNSLSPTIPNEAKTDSSDDIGSFKFPPSGGDQGDTSGQSSSSHNRSRSLAYGQQSFKFPPTPDQSNDTRGNSLLPPNPNFSVTQSPDRGHNRRSSHFRTGSRGSGSNTNTDGINSNWRAQQQSPQQQQRQGGLLEPPQVGFTPGHKPRNSSYGGGSSVSSLQQFLPNNGGSNNSGQQGGHQGGGNNGRKTLFAPYLPQSSLPELINEGRLVTGTLRVNKKNRSDAYVSTDGLLDADIFICGSKDRNRALEGDLVAVELLIVDEVWESKKEKEEKKRRKDNTLHSRPLTDDIHNDATSAPNTAEGSVTGTSKEDGAGSNEEETGGLARRGSLKQRPTMKKNDDVEVEGQSLLLVEEEEINDEIKPLYAGHVVAVVDRIPGQLFAGTLGLLRPAQAAQAARDKKNGKESTVQNPKAPKIVWFKPTDKKVPLIAIPTEQAPKDFVENHEKYADRLFVASIKRWPITSLHPFGTLVSNLGPIDSPETEIDSILRDNNFLCDEYPDDDNDDIVSVNAYDLPSIEPEFENTQREEYLNDYIIAFTQNGEFVDHALHVKRISNTKIELGFHVADIAYFIKPGSSLDRKSKKRSSSVFLPQKTVNLFPKQVNKIVSFKENEKNLAVSVVFEIDTSNFEVEDLYIHESVIVPKQLVTYDAFDTILSGQSVDSISSATSDYVKTFSLIAKEFRRHRLSNRSLGITPNLTLLDQLDDEKVRLDLNIFKDSLAFDVISEISHKVNSAIAAKVHAGLGDQAILRRHPLPTLQKMETFVRKATSLGFKIDTTTSSTLQNSILKIDDPVKRKCVETLLYKCMSRGRYYVAGKQDTDSYAHYYFNLPLYTHFTAPLRRYADLIVHRQLKAVLNKQVEDKDLDSLKAITDYCNFKKDCAANAQEQAIHLLLSQTINEMSETAGQLLCMGTVVQVYESSFDVFIPEFGVEKRVHGDQLPLVKAEFDKNERILELWWEKGVDSATYIPPDEKSSLSYRNSIKNKYRTSALQAAKIQSKTALEKSTTPADSVAEKLAKLNLEPPKLVVPSLKSNELHEVEKDETKSMPSSPTQSEIPKNVRTNSSSRISSSGNTFSLEPYLQNTITRIEGDSYIQVIKELTQVPVLLRAEIGMALPCLTVRVLNPFAEEQ</sequence>
<evidence type="ECO:0000255" key="1"/>
<evidence type="ECO:0000256" key="2">
    <source>
        <dbReference type="SAM" id="MobiDB-lite"/>
    </source>
</evidence>
<evidence type="ECO:0000269" key="3">
    <source>
    </source>
</evidence>
<evidence type="ECO:0000269" key="4">
    <source>
    </source>
</evidence>
<evidence type="ECO:0000269" key="5">
    <source>
    </source>
</evidence>
<evidence type="ECO:0000305" key="6"/>
<comment type="function">
    <text evidence="3 4 5">Plays a role in resistance to host antimicrobial peptides such as protamine, RP-1, or human beta-defensin-2; allowing colonization of human tissues. Required for resistance to membrane permeabilization and maintenance of mitochondrial membrane potential upon exposure to RP-1.</text>
</comment>
<comment type="induction">
    <text evidence="5">Constitutively expressed and not cell-cycle regulated like its S.cerevisiae ortholog.</text>
</comment>
<comment type="disruption phenotype">
    <text evidence="3">Decreases virulence in murine infection models.</text>
</comment>
<comment type="similarity">
    <text evidence="6">Belongs to the RNR ribonuclease family.</text>
</comment>
<keyword id="KW-1185">Reference proteome</keyword>
<keyword id="KW-0843">Virulence</keyword>
<name>SSD1_CANAL</name>
<organism>
    <name type="scientific">Candida albicans (strain SC5314 / ATCC MYA-2876)</name>
    <name type="common">Yeast</name>
    <dbReference type="NCBI Taxonomy" id="237561"/>
    <lineage>
        <taxon>Eukaryota</taxon>
        <taxon>Fungi</taxon>
        <taxon>Dikarya</taxon>
        <taxon>Ascomycota</taxon>
        <taxon>Saccharomycotina</taxon>
        <taxon>Pichiomycetes</taxon>
        <taxon>Debaryomycetaceae</taxon>
        <taxon>Candida/Lodderomyces clade</taxon>
        <taxon>Candida</taxon>
    </lineage>
</organism>